<gene>
    <name evidence="3" type="primary">sge1</name>
    <name evidence="5" type="ORF">FFUJ_07864</name>
</gene>
<organism>
    <name type="scientific">Gibberella fujikuroi (strain CBS 195.34 / IMI 58289 / NRRL A-6831)</name>
    <name type="common">Bakanae and foot rot disease fungus</name>
    <name type="synonym">Fusarium fujikuroi</name>
    <dbReference type="NCBI Taxonomy" id="1279085"/>
    <lineage>
        <taxon>Eukaryota</taxon>
        <taxon>Fungi</taxon>
        <taxon>Dikarya</taxon>
        <taxon>Ascomycota</taxon>
        <taxon>Pezizomycotina</taxon>
        <taxon>Sordariomycetes</taxon>
        <taxon>Hypocreomycetidae</taxon>
        <taxon>Hypocreales</taxon>
        <taxon>Nectriaceae</taxon>
        <taxon>Fusarium</taxon>
        <taxon>Fusarium fujikuroi species complex</taxon>
    </lineage>
</organism>
<keyword id="KW-0010">Activator</keyword>
<keyword id="KW-0539">Nucleus</keyword>
<keyword id="KW-1185">Reference proteome</keyword>
<keyword id="KW-0804">Transcription</keyword>
<keyword id="KW-0805">Transcription regulation</keyword>
<comment type="function">
    <text evidence="2">Global transcriptional regulator that acts as an activator of secondary metabolism. Required for expression of a yet uncharacterized secondary metabolism gene cluster containing a non-canonical non-ribosomal peptide synthetase. Not required for conidiogenesis nor for pathogenicity, but is involved in vegetative growth.</text>
</comment>
<comment type="subcellular location">
    <subcellularLocation>
        <location evidence="2">Nucleus</location>
    </subcellularLocation>
</comment>
<comment type="induction">
    <text evidence="2">Regulates its own expression in a negative feedback loop.</text>
</comment>
<comment type="similarity">
    <text evidence="4">Belongs to the MIT1/WOR1 family.</text>
</comment>
<dbReference type="EMBL" id="HF679027">
    <property type="protein sequence ID" value="CCT69384.1"/>
    <property type="molecule type" value="Genomic_DNA"/>
</dbReference>
<dbReference type="SMR" id="S0E3H0"/>
<dbReference type="STRING" id="1279085.S0E3H0"/>
<dbReference type="EnsemblFungi" id="CCT69384">
    <property type="protein sequence ID" value="CCT69384"/>
    <property type="gene ID" value="FFUJ_07864"/>
</dbReference>
<dbReference type="VEuPathDB" id="FungiDB:FFUJ_07864"/>
<dbReference type="HOGENOM" id="CLU_028895_3_0_1"/>
<dbReference type="PHI-base" id="PHI:3210"/>
<dbReference type="Proteomes" id="UP000016800">
    <property type="component" value="Chromosome 5"/>
</dbReference>
<dbReference type="GO" id="GO:0005634">
    <property type="term" value="C:nucleus"/>
    <property type="evidence" value="ECO:0007669"/>
    <property type="project" value="UniProtKB-SubCell"/>
</dbReference>
<dbReference type="GO" id="GO:0003677">
    <property type="term" value="F:DNA binding"/>
    <property type="evidence" value="ECO:0007669"/>
    <property type="project" value="TreeGrafter"/>
</dbReference>
<dbReference type="InterPro" id="IPR018608">
    <property type="entry name" value="Gti1/Pac2"/>
</dbReference>
<dbReference type="PANTHER" id="PTHR28027">
    <property type="entry name" value="TRANSCRIPTIONAL REGULATOR MIT1"/>
    <property type="match status" value="1"/>
</dbReference>
<dbReference type="PANTHER" id="PTHR28027:SF2">
    <property type="entry name" value="TRANSCRIPTIONAL REGULATOR MIT1"/>
    <property type="match status" value="1"/>
</dbReference>
<dbReference type="Pfam" id="PF09729">
    <property type="entry name" value="Gti1_Pac2"/>
    <property type="match status" value="1"/>
</dbReference>
<feature type="chain" id="PRO_0000431522" description="Global transcription regulator sge1">
    <location>
        <begin position="1"/>
        <end position="333"/>
    </location>
</feature>
<feature type="region of interest" description="Disordered" evidence="1">
    <location>
        <begin position="93"/>
        <end position="139"/>
    </location>
</feature>
<feature type="region of interest" description="Disordered" evidence="1">
    <location>
        <begin position="241"/>
        <end position="307"/>
    </location>
</feature>
<protein>
    <recommendedName>
        <fullName evidence="4">Global transcription regulator sge1</fullName>
    </recommendedName>
</protein>
<reference key="1">
    <citation type="journal article" date="2013" name="PLoS Pathog.">
        <title>Deciphering the cryptic genome: genome-wide analyses of the rice pathogen Fusarium fujikuroi reveal complex regulation of secondary metabolism and novel metabolites.</title>
        <authorList>
            <person name="Wiemann P."/>
            <person name="Sieber C.M.K."/>
            <person name="von Bargen K.W."/>
            <person name="Studt L."/>
            <person name="Niehaus E.-M."/>
            <person name="Espino J.J."/>
            <person name="Huss K."/>
            <person name="Michielse C.B."/>
            <person name="Albermann S."/>
            <person name="Wagner D."/>
            <person name="Bergner S.V."/>
            <person name="Connolly L.R."/>
            <person name="Fischer A."/>
            <person name="Reuter G."/>
            <person name="Kleigrewe K."/>
            <person name="Bald T."/>
            <person name="Wingfield B.D."/>
            <person name="Ophir R."/>
            <person name="Freeman S."/>
            <person name="Hippler M."/>
            <person name="Smith K.M."/>
            <person name="Brown D.W."/>
            <person name="Proctor R.H."/>
            <person name="Muensterkoetter M."/>
            <person name="Freitag M."/>
            <person name="Humpf H.-U."/>
            <person name="Gueldener U."/>
            <person name="Tudzynski B."/>
        </authorList>
    </citation>
    <scope>NUCLEOTIDE SEQUENCE [LARGE SCALE GENOMIC DNA]</scope>
    <source>
        <strain>CBS 195.34 / IMI 58289 / NRRL A-6831</strain>
    </source>
</reference>
<reference key="2">
    <citation type="journal article" date="2015" name="Environ. Microbiol.">
        <title>The global regulator FfSge1 is required for expression of secondary metabolite gene clusters but not for pathogenicity in Fusarium fujikuroi.</title>
        <authorList>
            <person name="Michielse C.B."/>
            <person name="Studt L."/>
            <person name="Janevska S."/>
            <person name="Sieber C.M."/>
            <person name="Arndt B."/>
            <person name="Espino J.J."/>
            <person name="Humpf H.U."/>
            <person name="Gueldener U."/>
            <person name="Tudzynski B."/>
        </authorList>
    </citation>
    <scope>INDUCTION</scope>
    <scope>SUBCELLULAR LOCATION</scope>
    <scope>FUNCTION</scope>
</reference>
<accession>S0E3H0</accession>
<evidence type="ECO:0000256" key="1">
    <source>
        <dbReference type="SAM" id="MobiDB-lite"/>
    </source>
</evidence>
<evidence type="ECO:0000269" key="2">
    <source>
    </source>
</evidence>
<evidence type="ECO:0000303" key="3">
    <source>
    </source>
</evidence>
<evidence type="ECO:0000305" key="4"/>
<evidence type="ECO:0000312" key="5">
    <source>
        <dbReference type="EMBL" id="CCT69384.1"/>
    </source>
</evidence>
<name>WOR1_GIBF5</name>
<sequence>MAGTMPLRPTYVGFVRDTTDALLIFEACLSGTLSHVPRRPHDRERQDLIKSGNIFVYEEHASGIKRWTDSISWSPSRILGNYLLYRELEKPFPPGEKKRARGRNGKSTTQSGGISKARQRNTVPFPQGLEHGNEYPSVPSDDERHLVGSLVDSYDFKEQGLVKKTISITYQGVPHHLVSYYNVEDVKAGLLSGPSDDPRLRGVVPRTELMNGQNFRAPVEEAMGGSYMPSMVASIGYPTLQHQSQMHQSQMHQPQMHQPQMHQSQMHQSQMHQPQMHQPQAHQPQVHQPQVHPPQVHQPQAHQPQYQSQTLHPTHGYQQTYAGQPNAPSSTWW</sequence>
<proteinExistence type="evidence at transcript level"/>